<name>SYR_ACIBY</name>
<organism>
    <name type="scientific">Acinetobacter baumannii (strain AYE)</name>
    <dbReference type="NCBI Taxonomy" id="509173"/>
    <lineage>
        <taxon>Bacteria</taxon>
        <taxon>Pseudomonadati</taxon>
        <taxon>Pseudomonadota</taxon>
        <taxon>Gammaproteobacteria</taxon>
        <taxon>Moraxellales</taxon>
        <taxon>Moraxellaceae</taxon>
        <taxon>Acinetobacter</taxon>
        <taxon>Acinetobacter calcoaceticus/baumannii complex</taxon>
    </lineage>
</organism>
<evidence type="ECO:0000255" key="1">
    <source>
        <dbReference type="HAMAP-Rule" id="MF_00123"/>
    </source>
</evidence>
<proteinExistence type="inferred from homology"/>
<reference key="1">
    <citation type="journal article" date="2008" name="PLoS ONE">
        <title>Comparative analysis of Acinetobacters: three genomes for three lifestyles.</title>
        <authorList>
            <person name="Vallenet D."/>
            <person name="Nordmann P."/>
            <person name="Barbe V."/>
            <person name="Poirel L."/>
            <person name="Mangenot S."/>
            <person name="Bataille E."/>
            <person name="Dossat C."/>
            <person name="Gas S."/>
            <person name="Kreimeyer A."/>
            <person name="Lenoble P."/>
            <person name="Oztas S."/>
            <person name="Poulain J."/>
            <person name="Segurens B."/>
            <person name="Robert C."/>
            <person name="Abergel C."/>
            <person name="Claverie J.-M."/>
            <person name="Raoult D."/>
            <person name="Medigue C."/>
            <person name="Weissenbach J."/>
            <person name="Cruveiller S."/>
        </authorList>
    </citation>
    <scope>NUCLEOTIDE SEQUENCE [LARGE SCALE GENOMIC DNA]</scope>
    <source>
        <strain>AYE</strain>
    </source>
</reference>
<dbReference type="EC" id="6.1.1.19" evidence="1"/>
<dbReference type="EMBL" id="CU459141">
    <property type="protein sequence ID" value="CAM88495.1"/>
    <property type="molecule type" value="Genomic_DNA"/>
</dbReference>
<dbReference type="RefSeq" id="WP_001090284.1">
    <property type="nucleotide sequence ID" value="NZ_JBDGFB010000006.1"/>
</dbReference>
<dbReference type="SMR" id="B0VBN5"/>
<dbReference type="EnsemblBacteria" id="CAM88495">
    <property type="protein sequence ID" value="CAM88495"/>
    <property type="gene ID" value="ABAYE3732"/>
</dbReference>
<dbReference type="GeneID" id="92892152"/>
<dbReference type="KEGG" id="aby:ABAYE3732"/>
<dbReference type="HOGENOM" id="CLU_006406_0_1_6"/>
<dbReference type="GO" id="GO:0005737">
    <property type="term" value="C:cytoplasm"/>
    <property type="evidence" value="ECO:0007669"/>
    <property type="project" value="UniProtKB-SubCell"/>
</dbReference>
<dbReference type="GO" id="GO:0004814">
    <property type="term" value="F:arginine-tRNA ligase activity"/>
    <property type="evidence" value="ECO:0007669"/>
    <property type="project" value="UniProtKB-UniRule"/>
</dbReference>
<dbReference type="GO" id="GO:0005524">
    <property type="term" value="F:ATP binding"/>
    <property type="evidence" value="ECO:0007669"/>
    <property type="project" value="UniProtKB-UniRule"/>
</dbReference>
<dbReference type="GO" id="GO:0006420">
    <property type="term" value="P:arginyl-tRNA aminoacylation"/>
    <property type="evidence" value="ECO:0007669"/>
    <property type="project" value="UniProtKB-UniRule"/>
</dbReference>
<dbReference type="CDD" id="cd00671">
    <property type="entry name" value="ArgRS_core"/>
    <property type="match status" value="1"/>
</dbReference>
<dbReference type="FunFam" id="1.10.730.10:FF:000008">
    <property type="entry name" value="Arginine--tRNA ligase"/>
    <property type="match status" value="1"/>
</dbReference>
<dbReference type="Gene3D" id="3.30.1360.70">
    <property type="entry name" value="Arginyl tRNA synthetase N-terminal domain"/>
    <property type="match status" value="1"/>
</dbReference>
<dbReference type="Gene3D" id="3.40.50.620">
    <property type="entry name" value="HUPs"/>
    <property type="match status" value="1"/>
</dbReference>
<dbReference type="Gene3D" id="1.10.730.10">
    <property type="entry name" value="Isoleucyl-tRNA Synthetase, Domain 1"/>
    <property type="match status" value="1"/>
</dbReference>
<dbReference type="HAMAP" id="MF_00123">
    <property type="entry name" value="Arg_tRNA_synth"/>
    <property type="match status" value="1"/>
</dbReference>
<dbReference type="InterPro" id="IPR001278">
    <property type="entry name" value="Arg-tRNA-ligase"/>
</dbReference>
<dbReference type="InterPro" id="IPR005148">
    <property type="entry name" value="Arg-tRNA-synth_N"/>
</dbReference>
<dbReference type="InterPro" id="IPR036695">
    <property type="entry name" value="Arg-tRNA-synth_N_sf"/>
</dbReference>
<dbReference type="InterPro" id="IPR035684">
    <property type="entry name" value="ArgRS_core"/>
</dbReference>
<dbReference type="InterPro" id="IPR008909">
    <property type="entry name" value="DALR_anticod-bd"/>
</dbReference>
<dbReference type="InterPro" id="IPR014729">
    <property type="entry name" value="Rossmann-like_a/b/a_fold"/>
</dbReference>
<dbReference type="InterPro" id="IPR009080">
    <property type="entry name" value="tRNAsynth_Ia_anticodon-bd"/>
</dbReference>
<dbReference type="NCBIfam" id="TIGR00456">
    <property type="entry name" value="argS"/>
    <property type="match status" value="1"/>
</dbReference>
<dbReference type="PANTHER" id="PTHR11956:SF5">
    <property type="entry name" value="ARGININE--TRNA LIGASE, CYTOPLASMIC"/>
    <property type="match status" value="1"/>
</dbReference>
<dbReference type="PANTHER" id="PTHR11956">
    <property type="entry name" value="ARGINYL-TRNA SYNTHETASE"/>
    <property type="match status" value="1"/>
</dbReference>
<dbReference type="Pfam" id="PF03485">
    <property type="entry name" value="Arg_tRNA_synt_N"/>
    <property type="match status" value="1"/>
</dbReference>
<dbReference type="Pfam" id="PF05746">
    <property type="entry name" value="DALR_1"/>
    <property type="match status" value="1"/>
</dbReference>
<dbReference type="Pfam" id="PF00750">
    <property type="entry name" value="tRNA-synt_1d"/>
    <property type="match status" value="2"/>
</dbReference>
<dbReference type="PRINTS" id="PR01038">
    <property type="entry name" value="TRNASYNTHARG"/>
</dbReference>
<dbReference type="SMART" id="SM01016">
    <property type="entry name" value="Arg_tRNA_synt_N"/>
    <property type="match status" value="1"/>
</dbReference>
<dbReference type="SMART" id="SM00836">
    <property type="entry name" value="DALR_1"/>
    <property type="match status" value="1"/>
</dbReference>
<dbReference type="SUPFAM" id="SSF47323">
    <property type="entry name" value="Anticodon-binding domain of a subclass of class I aminoacyl-tRNA synthetases"/>
    <property type="match status" value="1"/>
</dbReference>
<dbReference type="SUPFAM" id="SSF55190">
    <property type="entry name" value="Arginyl-tRNA synthetase (ArgRS), N-terminal 'additional' domain"/>
    <property type="match status" value="1"/>
</dbReference>
<dbReference type="SUPFAM" id="SSF52374">
    <property type="entry name" value="Nucleotidylyl transferase"/>
    <property type="match status" value="1"/>
</dbReference>
<protein>
    <recommendedName>
        <fullName evidence="1">Arginine--tRNA ligase</fullName>
        <ecNumber evidence="1">6.1.1.19</ecNumber>
    </recommendedName>
    <alternativeName>
        <fullName evidence="1">Arginyl-tRNA synthetase</fullName>
        <shortName evidence="1">ArgRS</shortName>
    </alternativeName>
</protein>
<keyword id="KW-0030">Aminoacyl-tRNA synthetase</keyword>
<keyword id="KW-0067">ATP-binding</keyword>
<keyword id="KW-0963">Cytoplasm</keyword>
<keyword id="KW-0436">Ligase</keyword>
<keyword id="KW-0547">Nucleotide-binding</keyword>
<keyword id="KW-0648">Protein biosynthesis</keyword>
<gene>
    <name evidence="1" type="primary">argS</name>
    <name type="ordered locus">ABAYE3732</name>
</gene>
<sequence length="596" mass="66306">MNTAIQAALDHAVQTLQQEGVLPSDWNNSSNLTRTKDRSHGDFASNIAMIGSKAAGMKPRDLAEKILAALPEVADISKAEIAGPGFINFFLNADQRFAILDQIQAQKESFGRSQSNAAKKIQVEFVSANPTSSLHVGHGRGAAYGMTVANLLEATGAKVDREYYVNDAGRQMDILATSTYLRYLELLGQNLVFPKNAYQGDYVKEIAQGIIDKDGDAYVREVANVYKDVPEDVQYAEELDSEGNKVVLSGDKEKHIDGLIANSQQLLGEGYRVFHQAALHAILDDIKDDLADFGVTFNQWFSEASLSAKIDEALETLDQRGFLYEKDGNIWFKSTEFGDEKDRVVKRRNGQTTYFASDIAYHLNKLQRGYTDLVDIWGSDHHGYISRVKAAIDAMGYDSKKLTVLLVQFVSLWRGGEMVQMSSRSGQFVTLRDLRKEVGNDAARFYYVMRKSEQHIDFDLDLAVSQSKDNAVYYIQYAHARICRMLEKAASTGLQFEVSAARSHAARLSLDAETEILAKLAAYPDVVLRAANAYEPHQVGNYLKELAALFHGWYNEHKVLSDDAELTQARLLLSINVQQVLRNGLELLGVSAPEAM</sequence>
<feature type="chain" id="PRO_1000095328" description="Arginine--tRNA ligase">
    <location>
        <begin position="1"/>
        <end position="596"/>
    </location>
</feature>
<feature type="short sequence motif" description="'HIGH' region">
    <location>
        <begin position="128"/>
        <end position="138"/>
    </location>
</feature>
<comment type="catalytic activity">
    <reaction evidence="1">
        <text>tRNA(Arg) + L-arginine + ATP = L-arginyl-tRNA(Arg) + AMP + diphosphate</text>
        <dbReference type="Rhea" id="RHEA:20301"/>
        <dbReference type="Rhea" id="RHEA-COMP:9658"/>
        <dbReference type="Rhea" id="RHEA-COMP:9673"/>
        <dbReference type="ChEBI" id="CHEBI:30616"/>
        <dbReference type="ChEBI" id="CHEBI:32682"/>
        <dbReference type="ChEBI" id="CHEBI:33019"/>
        <dbReference type="ChEBI" id="CHEBI:78442"/>
        <dbReference type="ChEBI" id="CHEBI:78513"/>
        <dbReference type="ChEBI" id="CHEBI:456215"/>
        <dbReference type="EC" id="6.1.1.19"/>
    </reaction>
</comment>
<comment type="subunit">
    <text evidence="1">Monomer.</text>
</comment>
<comment type="subcellular location">
    <subcellularLocation>
        <location evidence="1">Cytoplasm</location>
    </subcellularLocation>
</comment>
<comment type="similarity">
    <text evidence="1">Belongs to the class-I aminoacyl-tRNA synthetase family.</text>
</comment>
<accession>B0VBN5</accession>